<sequence length="111" mass="12084">MTRGFGPFGKIQEALKKAQEVRDGAQRLQKELEEMEIVGEAGNGLVKVTVNGNQEPLKVSLDPQVLQESVDVVEDLLLTAMVNAYTQSAETMRKRMEELTGNISLPGLGLG</sequence>
<organism>
    <name type="scientific">Synechococcus sp. (strain JA-2-3B'a(2-13))</name>
    <name type="common">Cyanobacteria bacterium Yellowstone B-Prime</name>
    <dbReference type="NCBI Taxonomy" id="321332"/>
    <lineage>
        <taxon>Bacteria</taxon>
        <taxon>Bacillati</taxon>
        <taxon>Cyanobacteriota</taxon>
        <taxon>Cyanophyceae</taxon>
        <taxon>Synechococcales</taxon>
        <taxon>Synechococcaceae</taxon>
        <taxon>Synechococcus</taxon>
    </lineage>
</organism>
<accession>Q2JH54</accession>
<proteinExistence type="inferred from homology"/>
<reference key="1">
    <citation type="journal article" date="2007" name="ISME J.">
        <title>Population level functional diversity in a microbial community revealed by comparative genomic and metagenomic analyses.</title>
        <authorList>
            <person name="Bhaya D."/>
            <person name="Grossman A.R."/>
            <person name="Steunou A.-S."/>
            <person name="Khuri N."/>
            <person name="Cohan F.M."/>
            <person name="Hamamura N."/>
            <person name="Melendrez M.C."/>
            <person name="Bateson M.M."/>
            <person name="Ward D.M."/>
            <person name="Heidelberg J.F."/>
        </authorList>
    </citation>
    <scope>NUCLEOTIDE SEQUENCE [LARGE SCALE GENOMIC DNA]</scope>
    <source>
        <strain>JA-2-3B'a(2-13)</strain>
    </source>
</reference>
<keyword id="KW-0963">Cytoplasm</keyword>
<keyword id="KW-0238">DNA-binding</keyword>
<keyword id="KW-1185">Reference proteome</keyword>
<comment type="function">
    <text evidence="1">Binds to DNA and alters its conformation. May be involved in regulation of gene expression, nucleoid organization and DNA protection.</text>
</comment>
<comment type="subunit">
    <text evidence="1">Homodimer.</text>
</comment>
<comment type="subcellular location">
    <subcellularLocation>
        <location evidence="1">Cytoplasm</location>
        <location evidence="1">Nucleoid</location>
    </subcellularLocation>
</comment>
<comment type="similarity">
    <text evidence="1">Belongs to the YbaB/EbfC family.</text>
</comment>
<feature type="chain" id="PRO_1000003853" description="Nucleoid-associated protein CYB_2894">
    <location>
        <begin position="1"/>
        <end position="111"/>
    </location>
</feature>
<dbReference type="EMBL" id="CP000240">
    <property type="protein sequence ID" value="ABD03813.1"/>
    <property type="molecule type" value="Genomic_DNA"/>
</dbReference>
<dbReference type="RefSeq" id="WP_011434432.1">
    <property type="nucleotide sequence ID" value="NC_007776.1"/>
</dbReference>
<dbReference type="SMR" id="Q2JH54"/>
<dbReference type="STRING" id="321332.CYB_2894"/>
<dbReference type="KEGG" id="cyb:CYB_2894"/>
<dbReference type="eggNOG" id="COG0718">
    <property type="taxonomic scope" value="Bacteria"/>
</dbReference>
<dbReference type="HOGENOM" id="CLU_140930_0_1_3"/>
<dbReference type="OrthoDB" id="487780at2"/>
<dbReference type="Proteomes" id="UP000001938">
    <property type="component" value="Chromosome"/>
</dbReference>
<dbReference type="GO" id="GO:0043590">
    <property type="term" value="C:bacterial nucleoid"/>
    <property type="evidence" value="ECO:0007669"/>
    <property type="project" value="UniProtKB-UniRule"/>
</dbReference>
<dbReference type="GO" id="GO:0005829">
    <property type="term" value="C:cytosol"/>
    <property type="evidence" value="ECO:0007669"/>
    <property type="project" value="TreeGrafter"/>
</dbReference>
<dbReference type="GO" id="GO:0003677">
    <property type="term" value="F:DNA binding"/>
    <property type="evidence" value="ECO:0007669"/>
    <property type="project" value="UniProtKB-UniRule"/>
</dbReference>
<dbReference type="Gene3D" id="3.30.1310.10">
    <property type="entry name" value="Nucleoid-associated protein YbaB-like domain"/>
    <property type="match status" value="1"/>
</dbReference>
<dbReference type="HAMAP" id="MF_00274">
    <property type="entry name" value="DNA_YbaB_EbfC"/>
    <property type="match status" value="1"/>
</dbReference>
<dbReference type="InterPro" id="IPR036894">
    <property type="entry name" value="YbaB-like_sf"/>
</dbReference>
<dbReference type="InterPro" id="IPR004401">
    <property type="entry name" value="YbaB/EbfC"/>
</dbReference>
<dbReference type="NCBIfam" id="TIGR00103">
    <property type="entry name" value="DNA_YbaB_EbfC"/>
    <property type="match status" value="1"/>
</dbReference>
<dbReference type="PANTHER" id="PTHR33449">
    <property type="entry name" value="NUCLEOID-ASSOCIATED PROTEIN YBAB"/>
    <property type="match status" value="1"/>
</dbReference>
<dbReference type="PANTHER" id="PTHR33449:SF1">
    <property type="entry name" value="NUCLEOID-ASSOCIATED PROTEIN YBAB"/>
    <property type="match status" value="1"/>
</dbReference>
<dbReference type="Pfam" id="PF02575">
    <property type="entry name" value="YbaB_DNA_bd"/>
    <property type="match status" value="1"/>
</dbReference>
<dbReference type="PIRSF" id="PIRSF004555">
    <property type="entry name" value="UCP004555"/>
    <property type="match status" value="1"/>
</dbReference>
<dbReference type="SUPFAM" id="SSF82607">
    <property type="entry name" value="YbaB-like"/>
    <property type="match status" value="1"/>
</dbReference>
<evidence type="ECO:0000255" key="1">
    <source>
        <dbReference type="HAMAP-Rule" id="MF_00274"/>
    </source>
</evidence>
<gene>
    <name type="ordered locus">CYB_2894</name>
</gene>
<name>Y2894_SYNJB</name>
<protein>
    <recommendedName>
        <fullName evidence="1">Nucleoid-associated protein CYB_2894</fullName>
    </recommendedName>
</protein>